<feature type="signal peptide" evidence="1">
    <location>
        <begin position="1"/>
        <end position="42"/>
    </location>
</feature>
<feature type="chain" id="PRO_0000417867" description="Outer membrane protein assembly factor BamE">
    <location>
        <begin position="43"/>
        <end position="138"/>
    </location>
</feature>
<comment type="function">
    <text evidence="1">Part of the outer membrane protein assembly complex, which is involved in assembly and insertion of beta-barrel proteins into the outer membrane.</text>
</comment>
<comment type="subunit">
    <text evidence="1">Part of the Bam complex.</text>
</comment>
<comment type="subcellular location">
    <subcellularLocation>
        <location evidence="1">Cell outer membrane</location>
    </subcellularLocation>
</comment>
<comment type="similarity">
    <text evidence="1">Belongs to the BamE family.</text>
</comment>
<organism>
    <name type="scientific">Psychrobacter arcticus (strain DSM 17307 / VKM B-2377 / 273-4)</name>
    <dbReference type="NCBI Taxonomy" id="259536"/>
    <lineage>
        <taxon>Bacteria</taxon>
        <taxon>Pseudomonadati</taxon>
        <taxon>Pseudomonadota</taxon>
        <taxon>Gammaproteobacteria</taxon>
        <taxon>Moraxellales</taxon>
        <taxon>Moraxellaceae</taxon>
        <taxon>Psychrobacter</taxon>
    </lineage>
</organism>
<dbReference type="EMBL" id="CP000082">
    <property type="protein sequence ID" value="AAZ18134.1"/>
    <property type="molecule type" value="Genomic_DNA"/>
</dbReference>
<dbReference type="RefSeq" id="WP_011279572.1">
    <property type="nucleotide sequence ID" value="NC_007204.1"/>
</dbReference>
<dbReference type="SMR" id="Q4FV24"/>
<dbReference type="STRING" id="259536.Psyc_0264"/>
<dbReference type="KEGG" id="par:Psyc_0264"/>
<dbReference type="eggNOG" id="COG2913">
    <property type="taxonomic scope" value="Bacteria"/>
</dbReference>
<dbReference type="HOGENOM" id="CLU_083835_3_2_6"/>
<dbReference type="OrthoDB" id="9808250at2"/>
<dbReference type="Proteomes" id="UP000000546">
    <property type="component" value="Chromosome"/>
</dbReference>
<dbReference type="GO" id="GO:1990063">
    <property type="term" value="C:Bam protein complex"/>
    <property type="evidence" value="ECO:0007669"/>
    <property type="project" value="TreeGrafter"/>
</dbReference>
<dbReference type="GO" id="GO:0030674">
    <property type="term" value="F:protein-macromolecule adaptor activity"/>
    <property type="evidence" value="ECO:0007669"/>
    <property type="project" value="TreeGrafter"/>
</dbReference>
<dbReference type="GO" id="GO:0043165">
    <property type="term" value="P:Gram-negative-bacterium-type cell outer membrane assembly"/>
    <property type="evidence" value="ECO:0007669"/>
    <property type="project" value="UniProtKB-UniRule"/>
</dbReference>
<dbReference type="GO" id="GO:0051205">
    <property type="term" value="P:protein insertion into membrane"/>
    <property type="evidence" value="ECO:0007669"/>
    <property type="project" value="UniProtKB-UniRule"/>
</dbReference>
<dbReference type="Gene3D" id="3.30.1450.10">
    <property type="match status" value="1"/>
</dbReference>
<dbReference type="HAMAP" id="MF_00925">
    <property type="entry name" value="OM_assembly_BamE"/>
    <property type="match status" value="1"/>
</dbReference>
<dbReference type="InterPro" id="IPR026592">
    <property type="entry name" value="BamE"/>
</dbReference>
<dbReference type="InterPro" id="IPR037873">
    <property type="entry name" value="BamE-like"/>
</dbReference>
<dbReference type="InterPro" id="IPR007450">
    <property type="entry name" value="BamE_dom"/>
</dbReference>
<dbReference type="PANTHER" id="PTHR37482">
    <property type="entry name" value="OUTER MEMBRANE PROTEIN ASSEMBLY FACTOR BAME"/>
    <property type="match status" value="1"/>
</dbReference>
<dbReference type="PANTHER" id="PTHR37482:SF1">
    <property type="entry name" value="OUTER MEMBRANE PROTEIN ASSEMBLY FACTOR BAME"/>
    <property type="match status" value="1"/>
</dbReference>
<dbReference type="Pfam" id="PF04355">
    <property type="entry name" value="BamE"/>
    <property type="match status" value="1"/>
</dbReference>
<proteinExistence type="inferred from homology"/>
<keyword id="KW-0998">Cell outer membrane</keyword>
<keyword id="KW-0472">Membrane</keyword>
<keyword id="KW-1185">Reference proteome</keyword>
<keyword id="KW-0732">Signal</keyword>
<protein>
    <recommendedName>
        <fullName evidence="1">Outer membrane protein assembly factor BamE</fullName>
    </recommendedName>
</protein>
<sequence length="138" mass="15260">MSHLTMIKTLNLRPFHSASALRKIVITSILGVAVTMSGCSLLSVYKIDLPQGTPITQTQAQKLQVGMNQNQVLYILGSPAIRDTLEPNRWDYIYDYQAGTEARRKGIADVKNASQHLKVYFDNNGIVTGIQGLESLPK</sequence>
<gene>
    <name evidence="1" type="primary">bamE</name>
    <name type="synonym">omlA</name>
    <name type="ordered locus">Psyc_0264</name>
</gene>
<accession>Q4FV24</accession>
<evidence type="ECO:0000255" key="1">
    <source>
        <dbReference type="HAMAP-Rule" id="MF_00925"/>
    </source>
</evidence>
<name>BAME_PSYA2</name>
<reference key="1">
    <citation type="journal article" date="2010" name="Appl. Environ. Microbiol.">
        <title>The genome sequence of Psychrobacter arcticus 273-4, a psychroactive Siberian permafrost bacterium, reveals mechanisms for adaptation to low-temperature growth.</title>
        <authorList>
            <person name="Ayala-del-Rio H.L."/>
            <person name="Chain P.S."/>
            <person name="Grzymski J.J."/>
            <person name="Ponder M.A."/>
            <person name="Ivanova N."/>
            <person name="Bergholz P.W."/>
            <person name="Di Bartolo G."/>
            <person name="Hauser L."/>
            <person name="Land M."/>
            <person name="Bakermans C."/>
            <person name="Rodrigues D."/>
            <person name="Klappenbach J."/>
            <person name="Zarka D."/>
            <person name="Larimer F."/>
            <person name="Richardson P."/>
            <person name="Murray A."/>
            <person name="Thomashow M."/>
            <person name="Tiedje J.M."/>
        </authorList>
    </citation>
    <scope>NUCLEOTIDE SEQUENCE [LARGE SCALE GENOMIC DNA]</scope>
    <source>
        <strain>DSM 17307 / VKM B-2377 / 273-4</strain>
    </source>
</reference>